<proteinExistence type="inferred from homology"/>
<comment type="catalytic activity">
    <reaction evidence="1">
        <text>1-(5-phospho-beta-D-ribosyl)-5-[(5-phospho-beta-D-ribosylamino)methylideneamino]imidazole-4-carboxamide = 5-[(5-phospho-1-deoxy-D-ribulos-1-ylimino)methylamino]-1-(5-phospho-beta-D-ribosyl)imidazole-4-carboxamide</text>
        <dbReference type="Rhea" id="RHEA:15469"/>
        <dbReference type="ChEBI" id="CHEBI:58435"/>
        <dbReference type="ChEBI" id="CHEBI:58525"/>
        <dbReference type="EC" id="5.3.1.16"/>
    </reaction>
</comment>
<comment type="pathway">
    <text evidence="1">Amino-acid biosynthesis; L-histidine biosynthesis; L-histidine from 5-phospho-alpha-D-ribose 1-diphosphate: step 4/9.</text>
</comment>
<comment type="subcellular location">
    <subcellularLocation>
        <location evidence="1">Cytoplasm</location>
    </subcellularLocation>
</comment>
<comment type="similarity">
    <text evidence="1">Belongs to the HisA/HisF family.</text>
</comment>
<evidence type="ECO:0000255" key="1">
    <source>
        <dbReference type="HAMAP-Rule" id="MF_01014"/>
    </source>
</evidence>
<keyword id="KW-0028">Amino-acid biosynthesis</keyword>
<keyword id="KW-0963">Cytoplasm</keyword>
<keyword id="KW-0368">Histidine biosynthesis</keyword>
<keyword id="KW-0413">Isomerase</keyword>
<keyword id="KW-1185">Reference proteome</keyword>
<organism>
    <name type="scientific">Acetivibrio thermocellus (strain ATCC 27405 / DSM 1237 / JCM 9322 / NBRC 103400 / NCIMB 10682 / NRRL B-4536 / VPI 7372)</name>
    <name type="common">Clostridium thermocellum</name>
    <dbReference type="NCBI Taxonomy" id="203119"/>
    <lineage>
        <taxon>Bacteria</taxon>
        <taxon>Bacillati</taxon>
        <taxon>Bacillota</taxon>
        <taxon>Clostridia</taxon>
        <taxon>Eubacteriales</taxon>
        <taxon>Oscillospiraceae</taxon>
        <taxon>Acetivibrio</taxon>
    </lineage>
</organism>
<feature type="chain" id="PRO_0000290466" description="1-(5-phosphoribosyl)-5-[(5-phosphoribosylamino)methylideneamino] imidazole-4-carboxamide isomerase">
    <location>
        <begin position="1"/>
        <end position="237"/>
    </location>
</feature>
<feature type="active site" description="Proton acceptor" evidence="1">
    <location>
        <position position="8"/>
    </location>
</feature>
<feature type="active site" description="Proton donor" evidence="1">
    <location>
        <position position="129"/>
    </location>
</feature>
<protein>
    <recommendedName>
        <fullName evidence="1">1-(5-phosphoribosyl)-5-[(5-phosphoribosylamino)methylideneamino] imidazole-4-carboxamide isomerase</fullName>
        <ecNumber evidence="1">5.3.1.16</ecNumber>
    </recommendedName>
    <alternativeName>
        <fullName evidence="1">Phosphoribosylformimino-5-aminoimidazole carboxamide ribotide isomerase</fullName>
    </alternativeName>
</protein>
<reference key="1">
    <citation type="submission" date="2007-02" db="EMBL/GenBank/DDBJ databases">
        <title>Complete sequence of Clostridium thermocellum ATCC 27405.</title>
        <authorList>
            <consortium name="US DOE Joint Genome Institute"/>
            <person name="Copeland A."/>
            <person name="Lucas S."/>
            <person name="Lapidus A."/>
            <person name="Barry K."/>
            <person name="Detter J.C."/>
            <person name="Glavina del Rio T."/>
            <person name="Hammon N."/>
            <person name="Israni S."/>
            <person name="Dalin E."/>
            <person name="Tice H."/>
            <person name="Pitluck S."/>
            <person name="Chertkov O."/>
            <person name="Brettin T."/>
            <person name="Bruce D."/>
            <person name="Han C."/>
            <person name="Tapia R."/>
            <person name="Gilna P."/>
            <person name="Schmutz J."/>
            <person name="Larimer F."/>
            <person name="Land M."/>
            <person name="Hauser L."/>
            <person name="Kyrpides N."/>
            <person name="Mikhailova N."/>
            <person name="Wu J.H.D."/>
            <person name="Newcomb M."/>
            <person name="Richardson P."/>
        </authorList>
    </citation>
    <scope>NUCLEOTIDE SEQUENCE [LARGE SCALE GENOMIC DNA]</scope>
    <source>
        <strain>ATCC 27405 / DSM 1237 / JCM 9322 / NBRC 103400 / NCIMB 10682 / NRRL B-4536 / VPI 7372</strain>
    </source>
</reference>
<dbReference type="EC" id="5.3.1.16" evidence="1"/>
<dbReference type="EMBL" id="CP000568">
    <property type="protein sequence ID" value="ABN54085.1"/>
    <property type="molecule type" value="Genomic_DNA"/>
</dbReference>
<dbReference type="RefSeq" id="WP_003514580.1">
    <property type="nucleotide sequence ID" value="NC_009012.1"/>
</dbReference>
<dbReference type="SMR" id="A3DJF6"/>
<dbReference type="STRING" id="203119.Cthe_2887"/>
<dbReference type="GeneID" id="35803460"/>
<dbReference type="KEGG" id="cth:Cthe_2887"/>
<dbReference type="eggNOG" id="COG0106">
    <property type="taxonomic scope" value="Bacteria"/>
</dbReference>
<dbReference type="HOGENOM" id="CLU_048577_1_1_9"/>
<dbReference type="OrthoDB" id="9807749at2"/>
<dbReference type="UniPathway" id="UPA00031">
    <property type="reaction ID" value="UER00009"/>
</dbReference>
<dbReference type="Proteomes" id="UP000002145">
    <property type="component" value="Chromosome"/>
</dbReference>
<dbReference type="GO" id="GO:0005737">
    <property type="term" value="C:cytoplasm"/>
    <property type="evidence" value="ECO:0007669"/>
    <property type="project" value="UniProtKB-SubCell"/>
</dbReference>
<dbReference type="GO" id="GO:0003949">
    <property type="term" value="F:1-(5-phosphoribosyl)-5-[(5-phosphoribosylamino)methylideneamino]imidazole-4-carboxamide isomerase activity"/>
    <property type="evidence" value="ECO:0007669"/>
    <property type="project" value="UniProtKB-UniRule"/>
</dbReference>
<dbReference type="GO" id="GO:0000105">
    <property type="term" value="P:L-histidine biosynthetic process"/>
    <property type="evidence" value="ECO:0007669"/>
    <property type="project" value="UniProtKB-UniRule"/>
</dbReference>
<dbReference type="GO" id="GO:0000162">
    <property type="term" value="P:L-tryptophan biosynthetic process"/>
    <property type="evidence" value="ECO:0007669"/>
    <property type="project" value="TreeGrafter"/>
</dbReference>
<dbReference type="CDD" id="cd04732">
    <property type="entry name" value="HisA"/>
    <property type="match status" value="1"/>
</dbReference>
<dbReference type="FunFam" id="3.20.20.70:FF:000009">
    <property type="entry name" value="1-(5-phosphoribosyl)-5-[(5-phosphoribosylamino)methylideneamino] imidazole-4-carboxamide isomerase"/>
    <property type="match status" value="1"/>
</dbReference>
<dbReference type="Gene3D" id="3.20.20.70">
    <property type="entry name" value="Aldolase class I"/>
    <property type="match status" value="1"/>
</dbReference>
<dbReference type="HAMAP" id="MF_01014">
    <property type="entry name" value="HisA"/>
    <property type="match status" value="1"/>
</dbReference>
<dbReference type="InterPro" id="IPR013785">
    <property type="entry name" value="Aldolase_TIM"/>
</dbReference>
<dbReference type="InterPro" id="IPR006062">
    <property type="entry name" value="His_biosynth"/>
</dbReference>
<dbReference type="InterPro" id="IPR006063">
    <property type="entry name" value="HisA_bact_arch"/>
</dbReference>
<dbReference type="InterPro" id="IPR044524">
    <property type="entry name" value="Isoase_HisA-like"/>
</dbReference>
<dbReference type="InterPro" id="IPR023016">
    <property type="entry name" value="Isoase_HisA-like_bact"/>
</dbReference>
<dbReference type="InterPro" id="IPR011060">
    <property type="entry name" value="RibuloseP-bd_barrel"/>
</dbReference>
<dbReference type="NCBIfam" id="TIGR00007">
    <property type="entry name" value="1-(5-phosphoribosyl)-5-[(5-phosphoribosylamino)methylideneamino]imidazole-4-carboxamide isomerase"/>
    <property type="match status" value="1"/>
</dbReference>
<dbReference type="NCBIfam" id="NF010112">
    <property type="entry name" value="PRK13585.1"/>
    <property type="match status" value="1"/>
</dbReference>
<dbReference type="PANTHER" id="PTHR43090">
    <property type="entry name" value="1-(5-PHOSPHORIBOSYL)-5-[(5-PHOSPHORIBOSYLAMINO)METHYLIDENEAMINO] IMIDAZOLE-4-CARBOXAMIDE ISOMERASE"/>
    <property type="match status" value="1"/>
</dbReference>
<dbReference type="PANTHER" id="PTHR43090:SF2">
    <property type="entry name" value="1-(5-PHOSPHORIBOSYL)-5-[(5-PHOSPHORIBOSYLAMINO)METHYLIDENEAMINO] IMIDAZOLE-4-CARBOXAMIDE ISOMERASE"/>
    <property type="match status" value="1"/>
</dbReference>
<dbReference type="Pfam" id="PF00977">
    <property type="entry name" value="His_biosynth"/>
    <property type="match status" value="1"/>
</dbReference>
<dbReference type="SUPFAM" id="SSF51366">
    <property type="entry name" value="Ribulose-phoshate binding barrel"/>
    <property type="match status" value="1"/>
</dbReference>
<gene>
    <name evidence="1" type="primary">hisA</name>
    <name type="ordered locus">Cthe_2887</name>
</gene>
<sequence>MIIYPAVDIKDGRCVRLVQGEFDKVTVYSDNPVEMGLKWERMGAQYLHVVDLDGARTGQIQNTPIISEMAVKLGIPVQLGGGIRTVETIETLLCKGIHRVILGTSAVKNPELVKQALKTFEDSVVIGIDAKDGMVAIEGWAKTSEFTAIGFAKKMEELGAKTIIYTDISRDGMLAGPNLKAMEEMVKAVNIEVIASGGVRNIDDIRNLKNVGVSGVIVGKALYTGDLDLKEAIEVAK</sequence>
<accession>A3DJF6</accession>
<name>HIS4_ACET2</name>